<feature type="chain" id="PRO_0000107785" description="Nucleotide-binding protein VIBHAR_03667">
    <location>
        <begin position="1"/>
        <end position="287"/>
    </location>
</feature>
<feature type="binding site" evidence="1">
    <location>
        <begin position="8"/>
        <end position="15"/>
    </location>
    <ligand>
        <name>ATP</name>
        <dbReference type="ChEBI" id="CHEBI:30616"/>
    </ligand>
</feature>
<feature type="binding site" evidence="1">
    <location>
        <begin position="56"/>
        <end position="59"/>
    </location>
    <ligand>
        <name>GTP</name>
        <dbReference type="ChEBI" id="CHEBI:37565"/>
    </ligand>
</feature>
<sequence>MRLIVVSGHSGAGKSVALRVLEDLGYYCVDNLPVNLLDAFVQSVSESKQNVAVSIDIRNIPKKLKELNTTLEKLKAELDVTVLFLDANKETLLTRYSETRRIHPLSLDSQSLSLDQAIELEQEILMPLKAHADLVLNSSGQSLHDLSETVRMRVEGRERKDLVMVFESFGFKYGLPSDADYVFDVRFLPNPHWEPALRPLTGLDGPIGAFLEQHQSVLDLKYQIESFIETWLPLLEKNNRSYLTVAIGCTGGKHRSVYLTQKIGEFFADKGHQVQIRHTSLEKNVKE</sequence>
<keyword id="KW-0067">ATP-binding</keyword>
<keyword id="KW-0342">GTP-binding</keyword>
<keyword id="KW-0547">Nucleotide-binding</keyword>
<protein>
    <recommendedName>
        <fullName evidence="1">Nucleotide-binding protein VIBHAR_03667</fullName>
    </recommendedName>
    <alternativeName>
        <fullName>orf4</fullName>
    </alternativeName>
</protein>
<proteinExistence type="inferred from homology"/>
<gene>
    <name type="ordered locus">VIBHAR_03667</name>
</gene>
<dbReference type="EMBL" id="AF227983">
    <property type="protein sequence ID" value="AAF72890.1"/>
    <property type="molecule type" value="Genomic_DNA"/>
</dbReference>
<dbReference type="EMBL" id="CP000789">
    <property type="protein sequence ID" value="ABU72581.1"/>
    <property type="molecule type" value="Genomic_DNA"/>
</dbReference>
<dbReference type="RefSeq" id="WP_012128979.1">
    <property type="nucleotide sequence ID" value="NC_009783.1"/>
</dbReference>
<dbReference type="SMR" id="Q9KIQ6"/>
<dbReference type="KEGG" id="vha:VIBHAR_03667"/>
<dbReference type="PATRIC" id="fig|338187.25.peg.2568"/>
<dbReference type="Proteomes" id="UP000008152">
    <property type="component" value="Chromosome I"/>
</dbReference>
<dbReference type="GO" id="GO:0005524">
    <property type="term" value="F:ATP binding"/>
    <property type="evidence" value="ECO:0007669"/>
    <property type="project" value="UniProtKB-UniRule"/>
</dbReference>
<dbReference type="GO" id="GO:0005525">
    <property type="term" value="F:GTP binding"/>
    <property type="evidence" value="ECO:0007669"/>
    <property type="project" value="UniProtKB-UniRule"/>
</dbReference>
<dbReference type="HAMAP" id="MF_00636">
    <property type="entry name" value="RapZ_like"/>
    <property type="match status" value="1"/>
</dbReference>
<dbReference type="InterPro" id="IPR027417">
    <property type="entry name" value="P-loop_NTPase"/>
</dbReference>
<dbReference type="InterPro" id="IPR005337">
    <property type="entry name" value="RapZ-like"/>
</dbReference>
<dbReference type="InterPro" id="IPR053930">
    <property type="entry name" value="RapZ-like_N"/>
</dbReference>
<dbReference type="InterPro" id="IPR053931">
    <property type="entry name" value="RapZ_C"/>
</dbReference>
<dbReference type="NCBIfam" id="NF003828">
    <property type="entry name" value="PRK05416.1"/>
    <property type="match status" value="1"/>
</dbReference>
<dbReference type="PANTHER" id="PTHR30448">
    <property type="entry name" value="RNASE ADAPTER PROTEIN RAPZ"/>
    <property type="match status" value="1"/>
</dbReference>
<dbReference type="PANTHER" id="PTHR30448:SF0">
    <property type="entry name" value="RNASE ADAPTER PROTEIN RAPZ"/>
    <property type="match status" value="1"/>
</dbReference>
<dbReference type="Pfam" id="PF22740">
    <property type="entry name" value="PapZ_C"/>
    <property type="match status" value="1"/>
</dbReference>
<dbReference type="Pfam" id="PF03668">
    <property type="entry name" value="RapZ-like_N"/>
    <property type="match status" value="1"/>
</dbReference>
<dbReference type="PIRSF" id="PIRSF005052">
    <property type="entry name" value="P-loopkin"/>
    <property type="match status" value="1"/>
</dbReference>
<dbReference type="SUPFAM" id="SSF52540">
    <property type="entry name" value="P-loop containing nucleoside triphosphate hydrolases"/>
    <property type="match status" value="1"/>
</dbReference>
<reference key="1">
    <citation type="journal article" date="2000" name="Mol. Microbiol.">
        <title>Regulation of quorum sensing in Vibrio harveyi by LuxO and sigma-54.</title>
        <authorList>
            <person name="Lilley B.N."/>
            <person name="Bassler B.L."/>
        </authorList>
    </citation>
    <scope>NUCLEOTIDE SEQUENCE [GENOMIC DNA]</scope>
</reference>
<reference key="2">
    <citation type="submission" date="2007-08" db="EMBL/GenBank/DDBJ databases">
        <authorList>
            <consortium name="The Vibrio harveyi Genome Sequencing Project"/>
            <person name="Bassler B."/>
            <person name="Clifton S.W."/>
            <person name="Fulton L."/>
            <person name="Delehaunty K."/>
            <person name="Fronick C."/>
            <person name="Harrison M."/>
            <person name="Markivic C."/>
            <person name="Fulton R."/>
            <person name="Tin-Wollam A.-M."/>
            <person name="Shah N."/>
            <person name="Pepin K."/>
            <person name="Nash W."/>
            <person name="Thiruvilangam P."/>
            <person name="Bhonagiri V."/>
            <person name="Waters C."/>
            <person name="Tu K.C."/>
            <person name="Irgon J."/>
            <person name="Wilson R.K."/>
        </authorList>
    </citation>
    <scope>NUCLEOTIDE SEQUENCE [LARGE SCALE GENOMIC DNA]</scope>
    <source>
        <strain>ATCC BAA-1116 / BB120</strain>
    </source>
</reference>
<evidence type="ECO:0000255" key="1">
    <source>
        <dbReference type="HAMAP-Rule" id="MF_00636"/>
    </source>
</evidence>
<accession>Q9KIQ6</accession>
<accession>A7MSC2</accession>
<name>Y3667_VIBC1</name>
<comment type="function">
    <text evidence="1">Displays ATPase and GTPase activities.</text>
</comment>
<comment type="similarity">
    <text evidence="1">Belongs to the RapZ-like family.</text>
</comment>
<organism>
    <name type="scientific">Vibrio campbellii (strain ATCC BAA-1116)</name>
    <dbReference type="NCBI Taxonomy" id="2902295"/>
    <lineage>
        <taxon>Bacteria</taxon>
        <taxon>Pseudomonadati</taxon>
        <taxon>Pseudomonadota</taxon>
        <taxon>Gammaproteobacteria</taxon>
        <taxon>Vibrionales</taxon>
        <taxon>Vibrionaceae</taxon>
        <taxon>Vibrio</taxon>
    </lineage>
</organism>